<name>TRUA_XANAC</name>
<keyword id="KW-0413">Isomerase</keyword>
<keyword id="KW-0819">tRNA processing</keyword>
<reference key="1">
    <citation type="journal article" date="2002" name="Nature">
        <title>Comparison of the genomes of two Xanthomonas pathogens with differing host specificities.</title>
        <authorList>
            <person name="da Silva A.C.R."/>
            <person name="Ferro J.A."/>
            <person name="Reinach F.C."/>
            <person name="Farah C.S."/>
            <person name="Furlan L.R."/>
            <person name="Quaggio R.B."/>
            <person name="Monteiro-Vitorello C.B."/>
            <person name="Van Sluys M.A."/>
            <person name="Almeida N.F. Jr."/>
            <person name="Alves L.M.C."/>
            <person name="do Amaral A.M."/>
            <person name="Bertolini M.C."/>
            <person name="Camargo L.E.A."/>
            <person name="Camarotte G."/>
            <person name="Cannavan F."/>
            <person name="Cardozo J."/>
            <person name="Chambergo F."/>
            <person name="Ciapina L.P."/>
            <person name="Cicarelli R.M.B."/>
            <person name="Coutinho L.L."/>
            <person name="Cursino-Santos J.R."/>
            <person name="El-Dorry H."/>
            <person name="Faria J.B."/>
            <person name="Ferreira A.J.S."/>
            <person name="Ferreira R.C.C."/>
            <person name="Ferro M.I.T."/>
            <person name="Formighieri E.F."/>
            <person name="Franco M.C."/>
            <person name="Greggio C.C."/>
            <person name="Gruber A."/>
            <person name="Katsuyama A.M."/>
            <person name="Kishi L.T."/>
            <person name="Leite R.P."/>
            <person name="Lemos E.G.M."/>
            <person name="Lemos M.V.F."/>
            <person name="Locali E.C."/>
            <person name="Machado M.A."/>
            <person name="Madeira A.M.B.N."/>
            <person name="Martinez-Rossi N.M."/>
            <person name="Martins E.C."/>
            <person name="Meidanis J."/>
            <person name="Menck C.F.M."/>
            <person name="Miyaki C.Y."/>
            <person name="Moon D.H."/>
            <person name="Moreira L.M."/>
            <person name="Novo M.T.M."/>
            <person name="Okura V.K."/>
            <person name="Oliveira M.C."/>
            <person name="Oliveira V.R."/>
            <person name="Pereira H.A."/>
            <person name="Rossi A."/>
            <person name="Sena J.A.D."/>
            <person name="Silva C."/>
            <person name="de Souza R.F."/>
            <person name="Spinola L.A.F."/>
            <person name="Takita M.A."/>
            <person name="Tamura R.E."/>
            <person name="Teixeira E.C."/>
            <person name="Tezza R.I.D."/>
            <person name="Trindade dos Santos M."/>
            <person name="Truffi D."/>
            <person name="Tsai S.M."/>
            <person name="White F.F."/>
            <person name="Setubal J.C."/>
            <person name="Kitajima J.P."/>
        </authorList>
    </citation>
    <scope>NUCLEOTIDE SEQUENCE [LARGE SCALE GENOMIC DNA]</scope>
    <source>
        <strain>306</strain>
    </source>
</reference>
<dbReference type="EC" id="5.4.99.12" evidence="1"/>
<dbReference type="EMBL" id="AE008923">
    <property type="protein sequence ID" value="AAM37565.1"/>
    <property type="molecule type" value="Genomic_DNA"/>
</dbReference>
<dbReference type="RefSeq" id="WP_003485510.1">
    <property type="nucleotide sequence ID" value="NC_003919.1"/>
</dbReference>
<dbReference type="SMR" id="Q8PJ25"/>
<dbReference type="GeneID" id="66911810"/>
<dbReference type="KEGG" id="xac:XAC2720"/>
<dbReference type="eggNOG" id="COG0101">
    <property type="taxonomic scope" value="Bacteria"/>
</dbReference>
<dbReference type="HOGENOM" id="CLU_014673_0_2_6"/>
<dbReference type="Proteomes" id="UP000000576">
    <property type="component" value="Chromosome"/>
</dbReference>
<dbReference type="GO" id="GO:0003723">
    <property type="term" value="F:RNA binding"/>
    <property type="evidence" value="ECO:0007669"/>
    <property type="project" value="InterPro"/>
</dbReference>
<dbReference type="GO" id="GO:0160147">
    <property type="term" value="F:tRNA pseudouridine(38-40) synthase activity"/>
    <property type="evidence" value="ECO:0007669"/>
    <property type="project" value="UniProtKB-EC"/>
</dbReference>
<dbReference type="GO" id="GO:0031119">
    <property type="term" value="P:tRNA pseudouridine synthesis"/>
    <property type="evidence" value="ECO:0007669"/>
    <property type="project" value="UniProtKB-UniRule"/>
</dbReference>
<dbReference type="CDD" id="cd02570">
    <property type="entry name" value="PseudoU_synth_EcTruA"/>
    <property type="match status" value="1"/>
</dbReference>
<dbReference type="FunFam" id="3.30.70.580:FF:000001">
    <property type="entry name" value="tRNA pseudouridine synthase A"/>
    <property type="match status" value="1"/>
</dbReference>
<dbReference type="FunFam" id="3.30.70.660:FF:000008">
    <property type="entry name" value="tRNA pseudouridine synthase A"/>
    <property type="match status" value="1"/>
</dbReference>
<dbReference type="Gene3D" id="3.30.70.660">
    <property type="entry name" value="Pseudouridine synthase I, catalytic domain, C-terminal subdomain"/>
    <property type="match status" value="1"/>
</dbReference>
<dbReference type="Gene3D" id="3.30.70.580">
    <property type="entry name" value="Pseudouridine synthase I, catalytic domain, N-terminal subdomain"/>
    <property type="match status" value="1"/>
</dbReference>
<dbReference type="HAMAP" id="MF_00171">
    <property type="entry name" value="TruA"/>
    <property type="match status" value="1"/>
</dbReference>
<dbReference type="InterPro" id="IPR020103">
    <property type="entry name" value="PsdUridine_synth_cat_dom_sf"/>
</dbReference>
<dbReference type="InterPro" id="IPR001406">
    <property type="entry name" value="PsdUridine_synth_TruA"/>
</dbReference>
<dbReference type="InterPro" id="IPR020097">
    <property type="entry name" value="PsdUridine_synth_TruA_a/b_dom"/>
</dbReference>
<dbReference type="InterPro" id="IPR020095">
    <property type="entry name" value="PsdUridine_synth_TruA_C"/>
</dbReference>
<dbReference type="InterPro" id="IPR020094">
    <property type="entry name" value="TruA/RsuA/RluB/E/F_N"/>
</dbReference>
<dbReference type="NCBIfam" id="TIGR00071">
    <property type="entry name" value="hisT_truA"/>
    <property type="match status" value="1"/>
</dbReference>
<dbReference type="PANTHER" id="PTHR11142">
    <property type="entry name" value="PSEUDOURIDYLATE SYNTHASE"/>
    <property type="match status" value="1"/>
</dbReference>
<dbReference type="PANTHER" id="PTHR11142:SF0">
    <property type="entry name" value="TRNA PSEUDOURIDINE SYNTHASE-LIKE 1"/>
    <property type="match status" value="1"/>
</dbReference>
<dbReference type="Pfam" id="PF01416">
    <property type="entry name" value="PseudoU_synth_1"/>
    <property type="match status" value="2"/>
</dbReference>
<dbReference type="PIRSF" id="PIRSF001430">
    <property type="entry name" value="tRNA_psdUrid_synth"/>
    <property type="match status" value="1"/>
</dbReference>
<dbReference type="SUPFAM" id="SSF55120">
    <property type="entry name" value="Pseudouridine synthase"/>
    <property type="match status" value="1"/>
</dbReference>
<sequence length="257" mass="28349">MRYALGVEYDGSEFQGWQQLGEHGGPSVQASLQAALSSVADAPVQVVCAGRTDAGVHGECQVVHFDSDARREPRGWMLGTTARLPPSIAVRWCVPAADDFHARFSARARRYRYRLLNRQIRPALYRQTLSWERRPLDADAMHGAAQALLGENDFSAFRSVQCQALHARRHLQAIHVQRIGEVVEVQVQANAFLHHMVRNIVGSLILVGTGEQPADWIATLLAGRDRTVAGPTAPPQGLVFIGPLYPAEWHLPAEVTQ</sequence>
<gene>
    <name evidence="1" type="primary">truA</name>
    <name type="ordered locus">XAC2720</name>
</gene>
<protein>
    <recommendedName>
        <fullName evidence="1">tRNA pseudouridine synthase A</fullName>
        <ecNumber evidence="1">5.4.99.12</ecNumber>
    </recommendedName>
    <alternativeName>
        <fullName evidence="1">tRNA pseudouridine(38-40) synthase</fullName>
    </alternativeName>
    <alternativeName>
        <fullName evidence="1">tRNA pseudouridylate synthase I</fullName>
    </alternativeName>
    <alternativeName>
        <fullName evidence="1">tRNA-uridine isomerase I</fullName>
    </alternativeName>
</protein>
<proteinExistence type="inferred from homology"/>
<evidence type="ECO:0000255" key="1">
    <source>
        <dbReference type="HAMAP-Rule" id="MF_00171"/>
    </source>
</evidence>
<comment type="function">
    <text evidence="1">Formation of pseudouridine at positions 38, 39 and 40 in the anticodon stem and loop of transfer RNAs.</text>
</comment>
<comment type="catalytic activity">
    <reaction evidence="1">
        <text>uridine(38/39/40) in tRNA = pseudouridine(38/39/40) in tRNA</text>
        <dbReference type="Rhea" id="RHEA:22376"/>
        <dbReference type="Rhea" id="RHEA-COMP:10085"/>
        <dbReference type="Rhea" id="RHEA-COMP:10087"/>
        <dbReference type="ChEBI" id="CHEBI:65314"/>
        <dbReference type="ChEBI" id="CHEBI:65315"/>
        <dbReference type="EC" id="5.4.99.12"/>
    </reaction>
</comment>
<comment type="subunit">
    <text evidence="1">Homodimer.</text>
</comment>
<comment type="similarity">
    <text evidence="1">Belongs to the tRNA pseudouridine synthase TruA family.</text>
</comment>
<organism>
    <name type="scientific">Xanthomonas axonopodis pv. citri (strain 306)</name>
    <dbReference type="NCBI Taxonomy" id="190486"/>
    <lineage>
        <taxon>Bacteria</taxon>
        <taxon>Pseudomonadati</taxon>
        <taxon>Pseudomonadota</taxon>
        <taxon>Gammaproteobacteria</taxon>
        <taxon>Lysobacterales</taxon>
        <taxon>Lysobacteraceae</taxon>
        <taxon>Xanthomonas</taxon>
    </lineage>
</organism>
<accession>Q8PJ25</accession>
<feature type="chain" id="PRO_0000057491" description="tRNA pseudouridine synthase A">
    <location>
        <begin position="1"/>
        <end position="257"/>
    </location>
</feature>
<feature type="active site" description="Nucleophile" evidence="1">
    <location>
        <position position="53"/>
    </location>
</feature>
<feature type="binding site" evidence="1">
    <location>
        <position position="111"/>
    </location>
    <ligand>
        <name>substrate</name>
    </ligand>
</feature>